<keyword id="KW-0342">GTP-binding</keyword>
<keyword id="KW-0396">Initiation factor</keyword>
<keyword id="KW-0547">Nucleotide-binding</keyword>
<keyword id="KW-0597">Phosphoprotein</keyword>
<keyword id="KW-0648">Protein biosynthesis</keyword>
<keyword id="KW-1185">Reference proteome</keyword>
<proteinExistence type="evidence at protein level"/>
<organism>
    <name type="scientific">Drosophila melanogaster</name>
    <name type="common">Fruit fly</name>
    <dbReference type="NCBI Taxonomy" id="7227"/>
    <lineage>
        <taxon>Eukaryota</taxon>
        <taxon>Metazoa</taxon>
        <taxon>Ecdysozoa</taxon>
        <taxon>Arthropoda</taxon>
        <taxon>Hexapoda</taxon>
        <taxon>Insecta</taxon>
        <taxon>Pterygota</taxon>
        <taxon>Neoptera</taxon>
        <taxon>Endopterygota</taxon>
        <taxon>Diptera</taxon>
        <taxon>Brachycera</taxon>
        <taxon>Muscomorpha</taxon>
        <taxon>Ephydroidea</taxon>
        <taxon>Drosophilidae</taxon>
        <taxon>Drosophila</taxon>
        <taxon>Sophophora</taxon>
    </lineage>
</organism>
<protein>
    <recommendedName>
        <fullName>Eukaryotic translation initiation factor 5</fullName>
        <shortName>eIF-5</shortName>
    </recommendedName>
</protein>
<feature type="chain" id="PRO_0000212520" description="Eukaryotic translation initiation factor 5">
    <location>
        <begin position="1"/>
        <end position="464"/>
    </location>
</feature>
<feature type="domain" description="W2" evidence="3">
    <location>
        <begin position="254"/>
        <end position="415"/>
    </location>
</feature>
<feature type="region of interest" description="Disordered" evidence="4">
    <location>
        <begin position="145"/>
        <end position="203"/>
    </location>
</feature>
<feature type="region of interest" description="Disordered" evidence="4">
    <location>
        <begin position="409"/>
        <end position="464"/>
    </location>
</feature>
<feature type="compositionally biased region" description="Polar residues" evidence="4">
    <location>
        <begin position="174"/>
        <end position="184"/>
    </location>
</feature>
<feature type="compositionally biased region" description="Acidic residues" evidence="4">
    <location>
        <begin position="410"/>
        <end position="427"/>
    </location>
</feature>
<feature type="compositionally biased region" description="Acidic residues" evidence="4">
    <location>
        <begin position="451"/>
        <end position="464"/>
    </location>
</feature>
<feature type="binding site" evidence="2">
    <location>
        <begin position="28"/>
        <end position="35"/>
    </location>
    <ligand>
        <name>GTP</name>
        <dbReference type="ChEBI" id="CHEBI:37565"/>
    </ligand>
</feature>
<feature type="modified residue" description="Phosphoserine" evidence="5">
    <location>
        <position position="9"/>
    </location>
</feature>
<feature type="modified residue" description="Phosphoserine" evidence="5">
    <location>
        <position position="412"/>
    </location>
</feature>
<feature type="modified residue" description="Phosphoserine" evidence="5">
    <location>
        <position position="413"/>
    </location>
</feature>
<feature type="modified residue" description="Phosphoserine" evidence="5">
    <location>
        <position position="415"/>
    </location>
</feature>
<name>IF5_DROME</name>
<gene>
    <name type="primary">eIF5</name>
    <name type="ORF">CG9177</name>
</gene>
<dbReference type="EMBL" id="AE014298">
    <property type="protein sequence ID" value="AAF48553.1"/>
    <property type="molecule type" value="Genomic_DNA"/>
</dbReference>
<dbReference type="EMBL" id="AE014298">
    <property type="protein sequence ID" value="AAS65378.1"/>
    <property type="molecule type" value="Genomic_DNA"/>
</dbReference>
<dbReference type="EMBL" id="AE014298">
    <property type="protein sequence ID" value="AAS65379.1"/>
    <property type="molecule type" value="Genomic_DNA"/>
</dbReference>
<dbReference type="EMBL" id="AE014298">
    <property type="protein sequence ID" value="AAS65380.1"/>
    <property type="molecule type" value="Genomic_DNA"/>
</dbReference>
<dbReference type="EMBL" id="AE014298">
    <property type="protein sequence ID" value="AAS65381.1"/>
    <property type="molecule type" value="Genomic_DNA"/>
</dbReference>
<dbReference type="EMBL" id="AE014298">
    <property type="protein sequence ID" value="AAS65382.1"/>
    <property type="molecule type" value="Genomic_DNA"/>
</dbReference>
<dbReference type="EMBL" id="AY060843">
    <property type="protein sequence ID" value="AAL28391.1"/>
    <property type="molecule type" value="mRNA"/>
</dbReference>
<dbReference type="RefSeq" id="NP_573098.1">
    <property type="nucleotide sequence ID" value="NM_132870.4"/>
</dbReference>
<dbReference type="RefSeq" id="NP_727922.1">
    <property type="nucleotide sequence ID" value="NM_167477.2"/>
</dbReference>
<dbReference type="RefSeq" id="NP_996477.1">
    <property type="nucleotide sequence ID" value="NM_206754.2"/>
</dbReference>
<dbReference type="RefSeq" id="NP_996478.1">
    <property type="nucleotide sequence ID" value="NM_206755.2"/>
</dbReference>
<dbReference type="RefSeq" id="NP_996479.1">
    <property type="nucleotide sequence ID" value="NM_206756.2"/>
</dbReference>
<dbReference type="RefSeq" id="NP_996480.1">
    <property type="nucleotide sequence ID" value="NM_206757.2"/>
</dbReference>
<dbReference type="RefSeq" id="NP_996481.1">
    <property type="nucleotide sequence ID" value="NM_206758.2"/>
</dbReference>
<dbReference type="SMR" id="Q9VXK6"/>
<dbReference type="BioGRID" id="58910">
    <property type="interactions" value="7"/>
</dbReference>
<dbReference type="DIP" id="DIP-21354N"/>
<dbReference type="FunCoup" id="Q9VXK6">
    <property type="interactions" value="2310"/>
</dbReference>
<dbReference type="IntAct" id="Q9VXK6">
    <property type="interactions" value="25"/>
</dbReference>
<dbReference type="STRING" id="7227.FBpp0089136"/>
<dbReference type="iPTMnet" id="Q9VXK6"/>
<dbReference type="PaxDb" id="7227-FBpp0073947"/>
<dbReference type="EnsemblMetazoa" id="FBtr0074144">
    <property type="protein sequence ID" value="FBpp0073947"/>
    <property type="gene ID" value="FBgn0030719"/>
</dbReference>
<dbReference type="EnsemblMetazoa" id="FBtr0074145">
    <property type="protein sequence ID" value="FBpp0073948"/>
    <property type="gene ID" value="FBgn0030719"/>
</dbReference>
<dbReference type="EnsemblMetazoa" id="FBtr0074146">
    <property type="protein sequence ID" value="FBpp0089136"/>
    <property type="gene ID" value="FBgn0030719"/>
</dbReference>
<dbReference type="EnsemblMetazoa" id="FBtr0074147">
    <property type="protein sequence ID" value="FBpp0089137"/>
    <property type="gene ID" value="FBgn0030719"/>
</dbReference>
<dbReference type="EnsemblMetazoa" id="FBtr0074148">
    <property type="protein sequence ID" value="FBpp0089138"/>
    <property type="gene ID" value="FBgn0030719"/>
</dbReference>
<dbReference type="EnsemblMetazoa" id="FBtr0074149">
    <property type="protein sequence ID" value="FBpp0089139"/>
    <property type="gene ID" value="FBgn0030719"/>
</dbReference>
<dbReference type="EnsemblMetazoa" id="FBtr0074150">
    <property type="protein sequence ID" value="FBpp0089140"/>
    <property type="gene ID" value="FBgn0030719"/>
</dbReference>
<dbReference type="GeneID" id="32566"/>
<dbReference type="KEGG" id="dme:Dmel_CG9177"/>
<dbReference type="UCSC" id="CG9177-RA">
    <property type="organism name" value="d. melanogaster"/>
</dbReference>
<dbReference type="AGR" id="FB:FBgn0030719"/>
<dbReference type="CTD" id="1983"/>
<dbReference type="FlyBase" id="FBgn0030719">
    <property type="gene designation" value="eIF5"/>
</dbReference>
<dbReference type="VEuPathDB" id="VectorBase:FBgn0030719"/>
<dbReference type="eggNOG" id="KOG2767">
    <property type="taxonomic scope" value="Eukaryota"/>
</dbReference>
<dbReference type="GeneTree" id="ENSGT00390000016478"/>
<dbReference type="HOGENOM" id="CLU_026663_1_0_1"/>
<dbReference type="InParanoid" id="Q9VXK6"/>
<dbReference type="OMA" id="YRYKMEK"/>
<dbReference type="OrthoDB" id="10250831at2759"/>
<dbReference type="PhylomeDB" id="Q9VXK6"/>
<dbReference type="Reactome" id="R-DME-72702">
    <property type="pathway name" value="Ribosomal scanning and start codon recognition"/>
</dbReference>
<dbReference type="BioGRID-ORCS" id="32566">
    <property type="hits" value="0 hits in 1 CRISPR screen"/>
</dbReference>
<dbReference type="ChiTaRS" id="eIF5">
    <property type="organism name" value="fly"/>
</dbReference>
<dbReference type="GenomeRNAi" id="32566"/>
<dbReference type="PRO" id="PR:Q9VXK6"/>
<dbReference type="Proteomes" id="UP000000803">
    <property type="component" value="Chromosome X"/>
</dbReference>
<dbReference type="Bgee" id="FBgn0030719">
    <property type="expression patterns" value="Expressed in distal medullary amacrine neuron Dm11 in insect head and 257 other cell types or tissues"/>
</dbReference>
<dbReference type="GO" id="GO:0005829">
    <property type="term" value="C:cytosol"/>
    <property type="evidence" value="ECO:0000250"/>
    <property type="project" value="FlyBase"/>
</dbReference>
<dbReference type="GO" id="GO:0071074">
    <property type="term" value="F:eukaryotic initiation factor eIF2 binding"/>
    <property type="evidence" value="ECO:0000318"/>
    <property type="project" value="GO_Central"/>
</dbReference>
<dbReference type="GO" id="GO:0005092">
    <property type="term" value="F:GDP-dissociation inhibitor activity"/>
    <property type="evidence" value="ECO:0000318"/>
    <property type="project" value="GO_Central"/>
</dbReference>
<dbReference type="GO" id="GO:0005525">
    <property type="term" value="F:GTP binding"/>
    <property type="evidence" value="ECO:0007669"/>
    <property type="project" value="UniProtKB-KW"/>
</dbReference>
<dbReference type="GO" id="GO:0003743">
    <property type="term" value="F:translation initiation factor activity"/>
    <property type="evidence" value="ECO:0000250"/>
    <property type="project" value="FlyBase"/>
</dbReference>
<dbReference type="GO" id="GO:0001732">
    <property type="term" value="P:formation of cytoplasmic translation initiation complex"/>
    <property type="evidence" value="ECO:0000318"/>
    <property type="project" value="GO_Central"/>
</dbReference>
<dbReference type="GO" id="GO:0006413">
    <property type="term" value="P:translational initiation"/>
    <property type="evidence" value="ECO:0000250"/>
    <property type="project" value="FlyBase"/>
</dbReference>
<dbReference type="CDD" id="cd11561">
    <property type="entry name" value="W2_eIF5"/>
    <property type="match status" value="1"/>
</dbReference>
<dbReference type="FunFam" id="2.20.25.350:FF:000001">
    <property type="entry name" value="Eukaryotic translation initiation factor 5"/>
    <property type="match status" value="1"/>
</dbReference>
<dbReference type="FunFam" id="3.30.30.170:FF:000002">
    <property type="entry name" value="Eukaryotic translation initiation factor 5"/>
    <property type="match status" value="1"/>
</dbReference>
<dbReference type="FunFam" id="1.25.40.180:FF:000018">
    <property type="entry name" value="eukaryotic translation initiation factor 5"/>
    <property type="match status" value="1"/>
</dbReference>
<dbReference type="Gene3D" id="1.25.40.180">
    <property type="match status" value="1"/>
</dbReference>
<dbReference type="Gene3D" id="2.20.25.350">
    <property type="match status" value="1"/>
</dbReference>
<dbReference type="Gene3D" id="3.30.30.170">
    <property type="match status" value="1"/>
</dbReference>
<dbReference type="InterPro" id="IPR016024">
    <property type="entry name" value="ARM-type_fold"/>
</dbReference>
<dbReference type="InterPro" id="IPR045196">
    <property type="entry name" value="IF2/IF5"/>
</dbReference>
<dbReference type="InterPro" id="IPR002735">
    <property type="entry name" value="Transl_init_fac_IF2/IF5_dom"/>
</dbReference>
<dbReference type="InterPro" id="IPR016189">
    <property type="entry name" value="Transl_init_fac_IF2/IF5_N"/>
</dbReference>
<dbReference type="InterPro" id="IPR016190">
    <property type="entry name" value="Transl_init_fac_IF2/IF5_Zn-bd"/>
</dbReference>
<dbReference type="InterPro" id="IPR003307">
    <property type="entry name" value="W2_domain"/>
</dbReference>
<dbReference type="PANTHER" id="PTHR23001">
    <property type="entry name" value="EUKARYOTIC TRANSLATION INITIATION FACTOR"/>
    <property type="match status" value="1"/>
</dbReference>
<dbReference type="PANTHER" id="PTHR23001:SF7">
    <property type="entry name" value="EUKARYOTIC TRANSLATION INITIATION FACTOR 5"/>
    <property type="match status" value="1"/>
</dbReference>
<dbReference type="Pfam" id="PF01873">
    <property type="entry name" value="eIF-5_eIF-2B"/>
    <property type="match status" value="1"/>
</dbReference>
<dbReference type="Pfam" id="PF02020">
    <property type="entry name" value="W2"/>
    <property type="match status" value="1"/>
</dbReference>
<dbReference type="SMART" id="SM00653">
    <property type="entry name" value="eIF2B_5"/>
    <property type="match status" value="1"/>
</dbReference>
<dbReference type="SMART" id="SM00515">
    <property type="entry name" value="eIF5C"/>
    <property type="match status" value="1"/>
</dbReference>
<dbReference type="SUPFAM" id="SSF48371">
    <property type="entry name" value="ARM repeat"/>
    <property type="match status" value="1"/>
</dbReference>
<dbReference type="SUPFAM" id="SSF100966">
    <property type="entry name" value="Translation initiation factor 2 beta, aIF2beta, N-terminal domain"/>
    <property type="match status" value="1"/>
</dbReference>
<dbReference type="SUPFAM" id="SSF75689">
    <property type="entry name" value="Zinc-binding domain of translation initiation factor 2 beta"/>
    <property type="match status" value="1"/>
</dbReference>
<dbReference type="PROSITE" id="PS51363">
    <property type="entry name" value="W2"/>
    <property type="match status" value="1"/>
</dbReference>
<accession>Q9VXK6</accession>
<accession>A4V4K0</accession>
<accession>Q0KHS2</accession>
<reference key="1">
    <citation type="journal article" date="2000" name="Science">
        <title>The genome sequence of Drosophila melanogaster.</title>
        <authorList>
            <person name="Adams M.D."/>
            <person name="Celniker S.E."/>
            <person name="Holt R.A."/>
            <person name="Evans C.A."/>
            <person name="Gocayne J.D."/>
            <person name="Amanatides P.G."/>
            <person name="Scherer S.E."/>
            <person name="Li P.W."/>
            <person name="Hoskins R.A."/>
            <person name="Galle R.F."/>
            <person name="George R.A."/>
            <person name="Lewis S.E."/>
            <person name="Richards S."/>
            <person name="Ashburner M."/>
            <person name="Henderson S.N."/>
            <person name="Sutton G.G."/>
            <person name="Wortman J.R."/>
            <person name="Yandell M.D."/>
            <person name="Zhang Q."/>
            <person name="Chen L.X."/>
            <person name="Brandon R.C."/>
            <person name="Rogers Y.-H.C."/>
            <person name="Blazej R.G."/>
            <person name="Champe M."/>
            <person name="Pfeiffer B.D."/>
            <person name="Wan K.H."/>
            <person name="Doyle C."/>
            <person name="Baxter E.G."/>
            <person name="Helt G."/>
            <person name="Nelson C.R."/>
            <person name="Miklos G.L.G."/>
            <person name="Abril J.F."/>
            <person name="Agbayani A."/>
            <person name="An H.-J."/>
            <person name="Andrews-Pfannkoch C."/>
            <person name="Baldwin D."/>
            <person name="Ballew R.M."/>
            <person name="Basu A."/>
            <person name="Baxendale J."/>
            <person name="Bayraktaroglu L."/>
            <person name="Beasley E.M."/>
            <person name="Beeson K.Y."/>
            <person name="Benos P.V."/>
            <person name="Berman B.P."/>
            <person name="Bhandari D."/>
            <person name="Bolshakov S."/>
            <person name="Borkova D."/>
            <person name="Botchan M.R."/>
            <person name="Bouck J."/>
            <person name="Brokstein P."/>
            <person name="Brottier P."/>
            <person name="Burtis K.C."/>
            <person name="Busam D.A."/>
            <person name="Butler H."/>
            <person name="Cadieu E."/>
            <person name="Center A."/>
            <person name="Chandra I."/>
            <person name="Cherry J.M."/>
            <person name="Cawley S."/>
            <person name="Dahlke C."/>
            <person name="Davenport L.B."/>
            <person name="Davies P."/>
            <person name="de Pablos B."/>
            <person name="Delcher A."/>
            <person name="Deng Z."/>
            <person name="Mays A.D."/>
            <person name="Dew I."/>
            <person name="Dietz S.M."/>
            <person name="Dodson K."/>
            <person name="Doup L.E."/>
            <person name="Downes M."/>
            <person name="Dugan-Rocha S."/>
            <person name="Dunkov B.C."/>
            <person name="Dunn P."/>
            <person name="Durbin K.J."/>
            <person name="Evangelista C.C."/>
            <person name="Ferraz C."/>
            <person name="Ferriera S."/>
            <person name="Fleischmann W."/>
            <person name="Fosler C."/>
            <person name="Gabrielian A.E."/>
            <person name="Garg N.S."/>
            <person name="Gelbart W.M."/>
            <person name="Glasser K."/>
            <person name="Glodek A."/>
            <person name="Gong F."/>
            <person name="Gorrell J.H."/>
            <person name="Gu Z."/>
            <person name="Guan P."/>
            <person name="Harris M."/>
            <person name="Harris N.L."/>
            <person name="Harvey D.A."/>
            <person name="Heiman T.J."/>
            <person name="Hernandez J.R."/>
            <person name="Houck J."/>
            <person name="Hostin D."/>
            <person name="Houston K.A."/>
            <person name="Howland T.J."/>
            <person name="Wei M.-H."/>
            <person name="Ibegwam C."/>
            <person name="Jalali M."/>
            <person name="Kalush F."/>
            <person name="Karpen G.H."/>
            <person name="Ke Z."/>
            <person name="Kennison J.A."/>
            <person name="Ketchum K.A."/>
            <person name="Kimmel B.E."/>
            <person name="Kodira C.D."/>
            <person name="Kraft C.L."/>
            <person name="Kravitz S."/>
            <person name="Kulp D."/>
            <person name="Lai Z."/>
            <person name="Lasko P."/>
            <person name="Lei Y."/>
            <person name="Levitsky A.A."/>
            <person name="Li J.H."/>
            <person name="Li Z."/>
            <person name="Liang Y."/>
            <person name="Lin X."/>
            <person name="Liu X."/>
            <person name="Mattei B."/>
            <person name="McIntosh T.C."/>
            <person name="McLeod M.P."/>
            <person name="McPherson D."/>
            <person name="Merkulov G."/>
            <person name="Milshina N.V."/>
            <person name="Mobarry C."/>
            <person name="Morris J."/>
            <person name="Moshrefi A."/>
            <person name="Mount S.M."/>
            <person name="Moy M."/>
            <person name="Murphy B."/>
            <person name="Murphy L."/>
            <person name="Muzny D.M."/>
            <person name="Nelson D.L."/>
            <person name="Nelson D.R."/>
            <person name="Nelson K.A."/>
            <person name="Nixon K."/>
            <person name="Nusskern D.R."/>
            <person name="Pacleb J.M."/>
            <person name="Palazzolo M."/>
            <person name="Pittman G.S."/>
            <person name="Pan S."/>
            <person name="Pollard J."/>
            <person name="Puri V."/>
            <person name="Reese M.G."/>
            <person name="Reinert K."/>
            <person name="Remington K."/>
            <person name="Saunders R.D.C."/>
            <person name="Scheeler F."/>
            <person name="Shen H."/>
            <person name="Shue B.C."/>
            <person name="Siden-Kiamos I."/>
            <person name="Simpson M."/>
            <person name="Skupski M.P."/>
            <person name="Smith T.J."/>
            <person name="Spier E."/>
            <person name="Spradling A.C."/>
            <person name="Stapleton M."/>
            <person name="Strong R."/>
            <person name="Sun E."/>
            <person name="Svirskas R."/>
            <person name="Tector C."/>
            <person name="Turner R."/>
            <person name="Venter E."/>
            <person name="Wang A.H."/>
            <person name="Wang X."/>
            <person name="Wang Z.-Y."/>
            <person name="Wassarman D.A."/>
            <person name="Weinstock G.M."/>
            <person name="Weissenbach J."/>
            <person name="Williams S.M."/>
            <person name="Woodage T."/>
            <person name="Worley K.C."/>
            <person name="Wu D."/>
            <person name="Yang S."/>
            <person name="Yao Q.A."/>
            <person name="Ye J."/>
            <person name="Yeh R.-F."/>
            <person name="Zaveri J.S."/>
            <person name="Zhan M."/>
            <person name="Zhang G."/>
            <person name="Zhao Q."/>
            <person name="Zheng L."/>
            <person name="Zheng X.H."/>
            <person name="Zhong F.N."/>
            <person name="Zhong W."/>
            <person name="Zhou X."/>
            <person name="Zhu S.C."/>
            <person name="Zhu X."/>
            <person name="Smith H.O."/>
            <person name="Gibbs R.A."/>
            <person name="Myers E.W."/>
            <person name="Rubin G.M."/>
            <person name="Venter J.C."/>
        </authorList>
    </citation>
    <scope>NUCLEOTIDE SEQUENCE [LARGE SCALE GENOMIC DNA]</scope>
    <source>
        <strain>Berkeley</strain>
    </source>
</reference>
<reference key="2">
    <citation type="journal article" date="2002" name="Genome Biol.">
        <title>Annotation of the Drosophila melanogaster euchromatic genome: a systematic review.</title>
        <authorList>
            <person name="Misra S."/>
            <person name="Crosby M.A."/>
            <person name="Mungall C.J."/>
            <person name="Matthews B.B."/>
            <person name="Campbell K.S."/>
            <person name="Hradecky P."/>
            <person name="Huang Y."/>
            <person name="Kaminker J.S."/>
            <person name="Millburn G.H."/>
            <person name="Prochnik S.E."/>
            <person name="Smith C.D."/>
            <person name="Tupy J.L."/>
            <person name="Whitfield E.J."/>
            <person name="Bayraktaroglu L."/>
            <person name="Berman B.P."/>
            <person name="Bettencourt B.R."/>
            <person name="Celniker S.E."/>
            <person name="de Grey A.D.N.J."/>
            <person name="Drysdale R.A."/>
            <person name="Harris N.L."/>
            <person name="Richter J."/>
            <person name="Russo S."/>
            <person name="Schroeder A.J."/>
            <person name="Shu S.Q."/>
            <person name="Stapleton M."/>
            <person name="Yamada C."/>
            <person name="Ashburner M."/>
            <person name="Gelbart W.M."/>
            <person name="Rubin G.M."/>
            <person name="Lewis S.E."/>
        </authorList>
    </citation>
    <scope>GENOME REANNOTATION</scope>
    <source>
        <strain>Berkeley</strain>
    </source>
</reference>
<reference key="3">
    <citation type="journal article" date="2002" name="Genome Biol.">
        <title>A Drosophila full-length cDNA resource.</title>
        <authorList>
            <person name="Stapleton M."/>
            <person name="Carlson J.W."/>
            <person name="Brokstein P."/>
            <person name="Yu C."/>
            <person name="Champe M."/>
            <person name="George R.A."/>
            <person name="Guarin H."/>
            <person name="Kronmiller B."/>
            <person name="Pacleb J.M."/>
            <person name="Park S."/>
            <person name="Wan K.H."/>
            <person name="Rubin G.M."/>
            <person name="Celniker S.E."/>
        </authorList>
    </citation>
    <scope>NUCLEOTIDE SEQUENCE [LARGE SCALE MRNA]</scope>
    <source>
        <strain>Berkeley</strain>
        <tissue>Ovary</tissue>
    </source>
</reference>
<reference key="4">
    <citation type="journal article" date="2008" name="J. Proteome Res.">
        <title>Phosphoproteome analysis of Drosophila melanogaster embryos.</title>
        <authorList>
            <person name="Zhai B."/>
            <person name="Villen J."/>
            <person name="Beausoleil S.A."/>
            <person name="Mintseris J."/>
            <person name="Gygi S.P."/>
        </authorList>
    </citation>
    <scope>PHOSPHORYLATION [LARGE SCALE ANALYSIS] AT SER-9; SER-412; SER-413 AND SER-415</scope>
    <scope>IDENTIFICATION BY MASS SPECTROMETRY</scope>
    <source>
        <tissue>Embryo</tissue>
    </source>
</reference>
<sequence length="464" mass="51700">MATVNVNRSVTDIFYRYKMPRLQAKVEGKGNGIKTVLVNMAEVARAIGRPATYPTKYFGCELGAQTLFDHKNERFVVNGSHDVNKLQDLLDGFIRKFVLCPECDNPETNLTVSAKNQTISQSCKACGFHGLLKVNHKVNTFIVKNPPSLNPAAQGSSLTEGKRSRKQKQKNDNADGSMTNNSLANNSGGESDGGNGTNQASQTEAEISAAIPEKTAKDDDDEGWSVDVSKEAIRARLQDLTDGAKGMTISDDYDKTEKERIDIFYELVKDKRDKKQLDDVQTHKELVIEAERLDIINKAPLVLAELLFTENIIKDVQKNRPLLLRFTLNNPKAQRYLIGGVEQTVELHKGILMSKVAGIFKLFYDLDILDEAVILEWAQKVSKRHVSKNIAAEIHEKAMPFVLWLKNAEEESSESEEEEDDESEEDNYVSSAGQRGGQRVVQRGIPRAVAGDEDDEDDVNIDDI</sequence>
<comment type="function">
    <text evidence="1">Catalyzes the hydrolysis of GTP bound to the 40S ribosomal initiation complex (40S.mRNA.Met-tRNA[F].eIF-2.GTP) with the subsequent joining of a 60S ribosomal subunit resulting in the release of eIF-2 and the guanine nucleotide. The subsequent joining of a 60S ribosomal subunit results in the formation of a functional 80S initiation complex (80S.mRNA.Met-tRNA[F]) (By similarity).</text>
</comment>
<comment type="similarity">
    <text evidence="6">Belongs to the eIF-2-beta/eIF-5 family.</text>
</comment>
<evidence type="ECO:0000250" key="1"/>
<evidence type="ECO:0000255" key="2"/>
<evidence type="ECO:0000255" key="3">
    <source>
        <dbReference type="PROSITE-ProRule" id="PRU00695"/>
    </source>
</evidence>
<evidence type="ECO:0000256" key="4">
    <source>
        <dbReference type="SAM" id="MobiDB-lite"/>
    </source>
</evidence>
<evidence type="ECO:0000269" key="5">
    <source>
    </source>
</evidence>
<evidence type="ECO:0000305" key="6"/>